<evidence type="ECO:0000250" key="1"/>
<evidence type="ECO:0000255" key="2">
    <source>
        <dbReference type="HAMAP-Rule" id="MF_00103"/>
    </source>
</evidence>
<protein>
    <recommendedName>
        <fullName evidence="2">Formamidopyrimidine-DNA glycosylase</fullName>
        <shortName evidence="2">Fapy-DNA glycosylase</shortName>
        <ecNumber evidence="2">3.2.2.23</ecNumber>
    </recommendedName>
    <alternativeName>
        <fullName evidence="2">DNA-(apurinic or apyrimidinic site) lyase MutM</fullName>
        <shortName evidence="2">AP lyase MutM</shortName>
        <ecNumber evidence="2">4.2.99.18</ecNumber>
    </alternativeName>
</protein>
<dbReference type="EC" id="3.2.2.23" evidence="2"/>
<dbReference type="EC" id="4.2.99.18" evidence="2"/>
<dbReference type="EMBL" id="CP000667">
    <property type="protein sequence ID" value="ABP53758.1"/>
    <property type="molecule type" value="Genomic_DNA"/>
</dbReference>
<dbReference type="RefSeq" id="WP_011905190.1">
    <property type="nucleotide sequence ID" value="NC_009380.1"/>
</dbReference>
<dbReference type="SMR" id="A4X4F8"/>
<dbReference type="STRING" id="369723.Strop_1288"/>
<dbReference type="KEGG" id="stp:Strop_1288"/>
<dbReference type="PATRIC" id="fig|369723.5.peg.1312"/>
<dbReference type="eggNOG" id="COG0266">
    <property type="taxonomic scope" value="Bacteria"/>
</dbReference>
<dbReference type="HOGENOM" id="CLU_038423_1_2_11"/>
<dbReference type="Proteomes" id="UP000000235">
    <property type="component" value="Chromosome"/>
</dbReference>
<dbReference type="GO" id="GO:0034039">
    <property type="term" value="F:8-oxo-7,8-dihydroguanine DNA N-glycosylase activity"/>
    <property type="evidence" value="ECO:0007669"/>
    <property type="project" value="TreeGrafter"/>
</dbReference>
<dbReference type="GO" id="GO:0140078">
    <property type="term" value="F:class I DNA-(apurinic or apyrimidinic site) endonuclease activity"/>
    <property type="evidence" value="ECO:0007669"/>
    <property type="project" value="UniProtKB-EC"/>
</dbReference>
<dbReference type="GO" id="GO:0003684">
    <property type="term" value="F:damaged DNA binding"/>
    <property type="evidence" value="ECO:0007669"/>
    <property type="project" value="InterPro"/>
</dbReference>
<dbReference type="GO" id="GO:0008270">
    <property type="term" value="F:zinc ion binding"/>
    <property type="evidence" value="ECO:0007669"/>
    <property type="project" value="UniProtKB-UniRule"/>
</dbReference>
<dbReference type="GO" id="GO:0006284">
    <property type="term" value="P:base-excision repair"/>
    <property type="evidence" value="ECO:0007669"/>
    <property type="project" value="InterPro"/>
</dbReference>
<dbReference type="CDD" id="cd08966">
    <property type="entry name" value="EcFpg-like_N"/>
    <property type="match status" value="1"/>
</dbReference>
<dbReference type="FunFam" id="1.10.8.50:FF:000003">
    <property type="entry name" value="Formamidopyrimidine-DNA glycosylase"/>
    <property type="match status" value="1"/>
</dbReference>
<dbReference type="Gene3D" id="1.10.8.50">
    <property type="match status" value="1"/>
</dbReference>
<dbReference type="Gene3D" id="3.20.190.10">
    <property type="entry name" value="MutM-like, N-terminal"/>
    <property type="match status" value="1"/>
</dbReference>
<dbReference type="HAMAP" id="MF_00103">
    <property type="entry name" value="Fapy_DNA_glycosyl"/>
    <property type="match status" value="1"/>
</dbReference>
<dbReference type="InterPro" id="IPR015886">
    <property type="entry name" value="DNA_glyclase/AP_lyase_DNA-bd"/>
</dbReference>
<dbReference type="InterPro" id="IPR020629">
    <property type="entry name" value="Formamido-pyr_DNA_Glyclase"/>
</dbReference>
<dbReference type="InterPro" id="IPR012319">
    <property type="entry name" value="FPG_cat"/>
</dbReference>
<dbReference type="InterPro" id="IPR035937">
    <property type="entry name" value="MutM-like_N-ter"/>
</dbReference>
<dbReference type="InterPro" id="IPR010979">
    <property type="entry name" value="Ribosomal_uS13-like_H2TH"/>
</dbReference>
<dbReference type="InterPro" id="IPR000214">
    <property type="entry name" value="Znf_DNA_glyclase/AP_lyase"/>
</dbReference>
<dbReference type="InterPro" id="IPR010663">
    <property type="entry name" value="Znf_FPG/IleRS"/>
</dbReference>
<dbReference type="NCBIfam" id="TIGR00577">
    <property type="entry name" value="fpg"/>
    <property type="match status" value="1"/>
</dbReference>
<dbReference type="NCBIfam" id="NF002211">
    <property type="entry name" value="PRK01103.1"/>
    <property type="match status" value="1"/>
</dbReference>
<dbReference type="PANTHER" id="PTHR22993">
    <property type="entry name" value="FORMAMIDOPYRIMIDINE-DNA GLYCOSYLASE"/>
    <property type="match status" value="1"/>
</dbReference>
<dbReference type="PANTHER" id="PTHR22993:SF9">
    <property type="entry name" value="FORMAMIDOPYRIMIDINE-DNA GLYCOSYLASE"/>
    <property type="match status" value="1"/>
</dbReference>
<dbReference type="Pfam" id="PF01149">
    <property type="entry name" value="Fapy_DNA_glyco"/>
    <property type="match status" value="1"/>
</dbReference>
<dbReference type="Pfam" id="PF06831">
    <property type="entry name" value="H2TH"/>
    <property type="match status" value="1"/>
</dbReference>
<dbReference type="Pfam" id="PF06827">
    <property type="entry name" value="zf-FPG_IleRS"/>
    <property type="match status" value="1"/>
</dbReference>
<dbReference type="SMART" id="SM00898">
    <property type="entry name" value="Fapy_DNA_glyco"/>
    <property type="match status" value="1"/>
</dbReference>
<dbReference type="SMART" id="SM01232">
    <property type="entry name" value="H2TH"/>
    <property type="match status" value="1"/>
</dbReference>
<dbReference type="SUPFAM" id="SSF57716">
    <property type="entry name" value="Glucocorticoid receptor-like (DNA-binding domain)"/>
    <property type="match status" value="1"/>
</dbReference>
<dbReference type="SUPFAM" id="SSF81624">
    <property type="entry name" value="N-terminal domain of MutM-like DNA repair proteins"/>
    <property type="match status" value="1"/>
</dbReference>
<dbReference type="SUPFAM" id="SSF46946">
    <property type="entry name" value="S13-like H2TH domain"/>
    <property type="match status" value="1"/>
</dbReference>
<dbReference type="PROSITE" id="PS51068">
    <property type="entry name" value="FPG_CAT"/>
    <property type="match status" value="1"/>
</dbReference>
<dbReference type="PROSITE" id="PS51066">
    <property type="entry name" value="ZF_FPG_2"/>
    <property type="match status" value="1"/>
</dbReference>
<comment type="function">
    <text evidence="2">Involved in base excision repair of DNA damaged by oxidation or by mutagenic agents. Acts as a DNA glycosylase that recognizes and removes damaged bases. Has a preference for oxidized purines, such as 7,8-dihydro-8-oxoguanine (8-oxoG). Has AP (apurinic/apyrimidinic) lyase activity and introduces nicks in the DNA strand. Cleaves the DNA backbone by beta-delta elimination to generate a single-strand break at the site of the removed base with both 3'- and 5'-phosphates.</text>
</comment>
<comment type="catalytic activity">
    <reaction evidence="2">
        <text>Hydrolysis of DNA containing ring-opened 7-methylguanine residues, releasing 2,6-diamino-4-hydroxy-5-(N-methyl)formamidopyrimidine.</text>
        <dbReference type="EC" id="3.2.2.23"/>
    </reaction>
</comment>
<comment type="catalytic activity">
    <reaction evidence="2">
        <text>2'-deoxyribonucleotide-(2'-deoxyribose 5'-phosphate)-2'-deoxyribonucleotide-DNA = a 3'-end 2'-deoxyribonucleotide-(2,3-dehydro-2,3-deoxyribose 5'-phosphate)-DNA + a 5'-end 5'-phospho-2'-deoxyribonucleoside-DNA + H(+)</text>
        <dbReference type="Rhea" id="RHEA:66592"/>
        <dbReference type="Rhea" id="RHEA-COMP:13180"/>
        <dbReference type="Rhea" id="RHEA-COMP:16897"/>
        <dbReference type="Rhea" id="RHEA-COMP:17067"/>
        <dbReference type="ChEBI" id="CHEBI:15378"/>
        <dbReference type="ChEBI" id="CHEBI:136412"/>
        <dbReference type="ChEBI" id="CHEBI:157695"/>
        <dbReference type="ChEBI" id="CHEBI:167181"/>
        <dbReference type="EC" id="4.2.99.18"/>
    </reaction>
</comment>
<comment type="cofactor">
    <cofactor evidence="2">
        <name>Zn(2+)</name>
        <dbReference type="ChEBI" id="CHEBI:29105"/>
    </cofactor>
    <text evidence="2">Binds 1 zinc ion per subunit.</text>
</comment>
<comment type="subunit">
    <text evidence="2">Monomer.</text>
</comment>
<comment type="similarity">
    <text evidence="2">Belongs to the FPG family.</text>
</comment>
<accession>A4X4F8</accession>
<proteinExistence type="inferred from homology"/>
<organism>
    <name type="scientific">Salinispora tropica (strain ATCC BAA-916 / DSM 44818 / JCM 13857 / NBRC 105044 / CNB-440)</name>
    <dbReference type="NCBI Taxonomy" id="369723"/>
    <lineage>
        <taxon>Bacteria</taxon>
        <taxon>Bacillati</taxon>
        <taxon>Actinomycetota</taxon>
        <taxon>Actinomycetes</taxon>
        <taxon>Micromonosporales</taxon>
        <taxon>Micromonosporaceae</taxon>
        <taxon>Salinispora</taxon>
    </lineage>
</organism>
<gene>
    <name evidence="2" type="primary">mutM</name>
    <name evidence="2" type="synonym">fpg</name>
    <name type="ordered locus">Strop_1288</name>
</gene>
<reference key="1">
    <citation type="journal article" date="2007" name="Proc. Natl. Acad. Sci. U.S.A.">
        <title>Genome sequencing reveals complex secondary metabolome in the marine actinomycete Salinispora tropica.</title>
        <authorList>
            <person name="Udwary D.W."/>
            <person name="Zeigler L."/>
            <person name="Asolkar R.N."/>
            <person name="Singan V."/>
            <person name="Lapidus A."/>
            <person name="Fenical W."/>
            <person name="Jensen P.R."/>
            <person name="Moore B.S."/>
        </authorList>
    </citation>
    <scope>NUCLEOTIDE SEQUENCE [LARGE SCALE GENOMIC DNA]</scope>
    <source>
        <strain>ATCC BAA-916 / DSM 44818 / JCM 13857 / NBRC 105044 / CNB-440</strain>
    </source>
</reference>
<sequence>MPELPEVETVRQGLAQWVTDRRIAEVQVLHPRAVRRHAAGAAHFADVLRETTVRDVRRRGKYLWLPLDSGDAVVGHLGMSGQLLLQPAAAPDETHLRVRFRFADDGPELRFVDQRTFGGLSVSAGGAELPTEIAHIARDPLDPEFSDATFVAALRRRRTEIKRALLDQTLLSGVGNIYADEALWRARLHGTRPTDGLTGPAVLRLLGHVRDVLGEAVKEGGTSFDALYVNVNGESGYFDRALNVYGRADQPCRRCGEPVRREAFMNRSSFSCPRCQPRPRRAVPARG</sequence>
<keyword id="KW-0227">DNA damage</keyword>
<keyword id="KW-0234">DNA repair</keyword>
<keyword id="KW-0238">DNA-binding</keyword>
<keyword id="KW-0326">Glycosidase</keyword>
<keyword id="KW-0378">Hydrolase</keyword>
<keyword id="KW-0456">Lyase</keyword>
<keyword id="KW-0479">Metal-binding</keyword>
<keyword id="KW-0511">Multifunctional enzyme</keyword>
<keyword id="KW-1185">Reference proteome</keyword>
<keyword id="KW-0862">Zinc</keyword>
<keyword id="KW-0863">Zinc-finger</keyword>
<feature type="initiator methionine" description="Removed" evidence="1">
    <location>
        <position position="1"/>
    </location>
</feature>
<feature type="chain" id="PRO_1000075711" description="Formamidopyrimidine-DNA glycosylase">
    <location>
        <begin position="2"/>
        <end position="287"/>
    </location>
</feature>
<feature type="zinc finger region" description="FPG-type" evidence="2">
    <location>
        <begin position="243"/>
        <end position="277"/>
    </location>
</feature>
<feature type="active site" description="Schiff-base intermediate with DNA" evidence="2">
    <location>
        <position position="2"/>
    </location>
</feature>
<feature type="active site" description="Proton donor" evidence="2">
    <location>
        <position position="3"/>
    </location>
</feature>
<feature type="active site" description="Proton donor; for beta-elimination activity" evidence="2">
    <location>
        <position position="61"/>
    </location>
</feature>
<feature type="active site" description="Proton donor; for delta-elimination activity" evidence="2">
    <location>
        <position position="267"/>
    </location>
</feature>
<feature type="binding site" evidence="2">
    <location>
        <position position="95"/>
    </location>
    <ligand>
        <name>DNA</name>
        <dbReference type="ChEBI" id="CHEBI:16991"/>
    </ligand>
</feature>
<feature type="binding site" evidence="2">
    <location>
        <position position="115"/>
    </location>
    <ligand>
        <name>DNA</name>
        <dbReference type="ChEBI" id="CHEBI:16991"/>
    </ligand>
</feature>
<feature type="binding site" evidence="2">
    <location>
        <position position="157"/>
    </location>
    <ligand>
        <name>DNA</name>
        <dbReference type="ChEBI" id="CHEBI:16991"/>
    </ligand>
</feature>
<name>FPG_SALTO</name>